<reference key="1">
    <citation type="journal article" date="2001" name="J. Bacteriol.">
        <title>Genome sequence and comparative analysis of the solvent-producing bacterium Clostridium acetobutylicum.</title>
        <authorList>
            <person name="Noelling J."/>
            <person name="Breton G."/>
            <person name="Omelchenko M.V."/>
            <person name="Makarova K.S."/>
            <person name="Zeng Q."/>
            <person name="Gibson R."/>
            <person name="Lee H.M."/>
            <person name="Dubois J."/>
            <person name="Qiu D."/>
            <person name="Hitti J."/>
            <person name="Wolf Y.I."/>
            <person name="Tatusov R.L."/>
            <person name="Sabathe F."/>
            <person name="Doucette-Stamm L.A."/>
            <person name="Soucaille P."/>
            <person name="Daly M.J."/>
            <person name="Bennett G.N."/>
            <person name="Koonin E.V."/>
            <person name="Smith D.R."/>
        </authorList>
    </citation>
    <scope>NUCLEOTIDE SEQUENCE [LARGE SCALE GENOMIC DNA]</scope>
    <source>
        <strain>ATCC 824 / DSM 792 / JCM 1419 / IAM 19013 / LMG 5710 / NBRC 13948 / NRRL B-527 / VKM B-1787 / 2291 / W</strain>
    </source>
</reference>
<reference key="2">
    <citation type="journal article" date="2011" name="J. Bacteriol.">
        <title>Characterization of an N-acetylmuramic acid/N-acetylglucosamine kinase of Clostridium acetobutylicum.</title>
        <authorList>
            <person name="Reith J."/>
            <person name="Berking A."/>
            <person name="Mayer C."/>
        </authorList>
    </citation>
    <scope>FUNCTION</scope>
    <scope>CATALYTIC ACTIVITY</scope>
    <scope>COFACTOR</scope>
    <scope>SUBSTRATE SPECIFICITY</scope>
    <scope>BIOPHYSICOCHEMICAL PROPERTIES</scope>
    <scope>SUBCELLULAR LOCATION</scope>
    <scope>PATHWAY</scope>
    <source>
        <strain>ATCC 824 / DSM 792 / JCM 1419 / IAM 19013 / LMG 5710 / NBRC 13948 / NRRL B-527 / VKM B-1787 / 2291 / W</strain>
    </source>
</reference>
<organism>
    <name type="scientific">Clostridium acetobutylicum (strain ATCC 824 / DSM 792 / JCM 1419 / IAM 19013 / LMG 5710 / NBRC 13948 / NRRL B-527 / VKM B-1787 / 2291 / W)</name>
    <dbReference type="NCBI Taxonomy" id="272562"/>
    <lineage>
        <taxon>Bacteria</taxon>
        <taxon>Bacillati</taxon>
        <taxon>Bacillota</taxon>
        <taxon>Clostridia</taxon>
        <taxon>Eubacteriales</taxon>
        <taxon>Clostridiaceae</taxon>
        <taxon>Clostridium</taxon>
    </lineage>
</organism>
<dbReference type="EC" id="2.7.1.-" evidence="2"/>
<dbReference type="EC" id="2.7.1.59" evidence="2"/>
<dbReference type="EMBL" id="AE001437">
    <property type="protein sequence ID" value="AAK78165.1"/>
    <property type="molecule type" value="Genomic_DNA"/>
</dbReference>
<dbReference type="PIR" id="B96922">
    <property type="entry name" value="B96922"/>
</dbReference>
<dbReference type="RefSeq" id="NP_346825.1">
    <property type="nucleotide sequence ID" value="NC_003030.1"/>
</dbReference>
<dbReference type="RefSeq" id="WP_010963507.1">
    <property type="nucleotide sequence ID" value="NC_003030.1"/>
</dbReference>
<dbReference type="SMR" id="Q97ML3"/>
<dbReference type="STRING" id="272562.CA_C0183"/>
<dbReference type="KEGG" id="cac:CA_C0183"/>
<dbReference type="PATRIC" id="fig|272562.8.peg.369"/>
<dbReference type="eggNOG" id="COG2971">
    <property type="taxonomic scope" value="Bacteria"/>
</dbReference>
<dbReference type="HOGENOM" id="CLU_016274_1_1_9"/>
<dbReference type="OrthoDB" id="9772633at2"/>
<dbReference type="UniPathway" id="UPA00544"/>
<dbReference type="Proteomes" id="UP000000814">
    <property type="component" value="Chromosome"/>
</dbReference>
<dbReference type="GO" id="GO:0005737">
    <property type="term" value="C:cytoplasm"/>
    <property type="evidence" value="ECO:0007669"/>
    <property type="project" value="UniProtKB-SubCell"/>
</dbReference>
<dbReference type="GO" id="GO:0005524">
    <property type="term" value="F:ATP binding"/>
    <property type="evidence" value="ECO:0000314"/>
    <property type="project" value="UniProtKB"/>
</dbReference>
<dbReference type="GO" id="GO:0019200">
    <property type="term" value="F:carbohydrate kinase activity"/>
    <property type="evidence" value="ECO:0000314"/>
    <property type="project" value="UniProtKB"/>
</dbReference>
<dbReference type="GO" id="GO:0045127">
    <property type="term" value="F:N-acetylglucosamine kinase activity"/>
    <property type="evidence" value="ECO:0000314"/>
    <property type="project" value="UniProtKB"/>
</dbReference>
<dbReference type="GO" id="GO:0046835">
    <property type="term" value="P:carbohydrate phosphorylation"/>
    <property type="evidence" value="ECO:0000314"/>
    <property type="project" value="UniProtKB"/>
</dbReference>
<dbReference type="GO" id="GO:0006044">
    <property type="term" value="P:N-acetylglucosamine metabolic process"/>
    <property type="evidence" value="ECO:0000314"/>
    <property type="project" value="UniProtKB"/>
</dbReference>
<dbReference type="GO" id="GO:0097172">
    <property type="term" value="P:N-acetylmuramic acid metabolic process"/>
    <property type="evidence" value="ECO:0000314"/>
    <property type="project" value="UniProtKB"/>
</dbReference>
<dbReference type="GO" id="GO:0009254">
    <property type="term" value="P:peptidoglycan turnover"/>
    <property type="evidence" value="ECO:0007669"/>
    <property type="project" value="UniProtKB-UniPathway"/>
</dbReference>
<dbReference type="CDD" id="cd24084">
    <property type="entry name" value="ASKHA_NBD_MurK-like"/>
    <property type="match status" value="1"/>
</dbReference>
<dbReference type="Gene3D" id="3.30.420.40">
    <property type="match status" value="2"/>
</dbReference>
<dbReference type="InterPro" id="IPR002731">
    <property type="entry name" value="ATPase_BadF"/>
</dbReference>
<dbReference type="InterPro" id="IPR043129">
    <property type="entry name" value="ATPase_NBD"/>
</dbReference>
<dbReference type="InterPro" id="IPR052519">
    <property type="entry name" value="Euk-type_GlcNAc_Kinase"/>
</dbReference>
<dbReference type="PANTHER" id="PTHR43190">
    <property type="entry name" value="N-ACETYL-D-GLUCOSAMINE KINASE"/>
    <property type="match status" value="1"/>
</dbReference>
<dbReference type="PANTHER" id="PTHR43190:SF3">
    <property type="entry name" value="N-ACETYL-D-GLUCOSAMINE KINASE"/>
    <property type="match status" value="1"/>
</dbReference>
<dbReference type="Pfam" id="PF01869">
    <property type="entry name" value="BcrAD_BadFG"/>
    <property type="match status" value="1"/>
</dbReference>
<dbReference type="SUPFAM" id="SSF53067">
    <property type="entry name" value="Actin-like ATPase domain"/>
    <property type="match status" value="2"/>
</dbReference>
<name>MURK_CLOAB</name>
<keyword id="KW-0067">ATP-binding</keyword>
<keyword id="KW-0963">Cytoplasm</keyword>
<keyword id="KW-0418">Kinase</keyword>
<keyword id="KW-0547">Nucleotide-binding</keyword>
<keyword id="KW-1185">Reference proteome</keyword>
<keyword id="KW-0808">Transferase</keyword>
<accession>Q97ML3</accession>
<protein>
    <recommendedName>
        <fullName evidence="3">N-acetylmuramic acid/N-acetylglucosamine kinase</fullName>
        <shortName evidence="3">MurNAc/GlcNAc kinase</shortName>
        <ecNumber evidence="2">2.7.1.-</ecNumber>
        <ecNumber evidence="2">2.7.1.59</ecNumber>
    </recommendedName>
    <alternativeName>
        <fullName evidence="3">Murein sugar kinase</fullName>
    </alternativeName>
</protein>
<proteinExistence type="evidence at protein level"/>
<sequence length="306" mass="33425">MKYVIGIDGGGSKTHMKISTLDYKVLLEVFKGPSNINSSTKEEVKRVLQELIMEGLGKLGQSLEECSAICIGTAGADRTEDKSIIEDMIRSLGYMGKIIVVNDAEIALAGGIEKREGIIVISGTGSICYGRNKEGRSARSGGWGHIIGDEGSGYDIGIKAIKAALKSFDKRGEKTILEGDILDFLKLKSHEDLINYIYRSGVTKKEIASLTRVVNSAYIKGDLVSKRILKEAARELFLSVKAVVEVLSMQNKKVVLTTAGGVINNINYLYDEFRKFLNLNYPKVKIISMKNDSAFGAVIIARSECD</sequence>
<gene>
    <name evidence="3" type="primary">murK</name>
    <name evidence="6" type="ordered locus">CA_C0183</name>
</gene>
<comment type="function">
    <text evidence="2">Catalyzes the ATP-dependent phosphorylation of both cell wall (peptidoglycan) amino sugars, N-acetylmuramic acid (MurNAc) and N-acetylglucosamine (GlcNAc), at the 6-hydroxyl group. Neither the non-N-acetylated forms of the cell wall sugars, i.e., glucosamine and/or muramic acid, nor epimeric hexoses or 1,6-anhydro-MurNAc are substrates for the enzyme. May have a role in the rescue of the murein sugars GlcNAc and MurNAc released from muropeptides during cell wall turnover in C.acetobutylicum.</text>
</comment>
<comment type="catalytic activity">
    <reaction evidence="2">
        <text>N-acetyl-D-glucosamine + ATP = N-acetyl-D-glucosamine 6-phosphate + ADP + H(+)</text>
        <dbReference type="Rhea" id="RHEA:17417"/>
        <dbReference type="ChEBI" id="CHEBI:15378"/>
        <dbReference type="ChEBI" id="CHEBI:30616"/>
        <dbReference type="ChEBI" id="CHEBI:57513"/>
        <dbReference type="ChEBI" id="CHEBI:456216"/>
        <dbReference type="ChEBI" id="CHEBI:506227"/>
        <dbReference type="EC" id="2.7.1.59"/>
    </reaction>
</comment>
<comment type="catalytic activity">
    <reaction evidence="2">
        <text>N-acetyl-D-muramate + ATP = N-acetyl-D-muramate 6-phosphate + ADP + H(+)</text>
        <dbReference type="Rhea" id="RHEA:51500"/>
        <dbReference type="ChEBI" id="CHEBI:15378"/>
        <dbReference type="ChEBI" id="CHEBI:28881"/>
        <dbReference type="ChEBI" id="CHEBI:30616"/>
        <dbReference type="ChEBI" id="CHEBI:58722"/>
        <dbReference type="ChEBI" id="CHEBI:456216"/>
    </reaction>
</comment>
<comment type="cofactor">
    <cofactor evidence="2">
        <name>Mg(2+)</name>
        <dbReference type="ChEBI" id="CHEBI:18420"/>
    </cofactor>
</comment>
<comment type="biophysicochemical properties">
    <kinetics>
        <KM evidence="2">190.2 uM for N-acetylmuramate</KM>
        <KM evidence="2">127.4 uM for N-acetyl-D-glucosamine</KM>
        <KM evidence="2">241.8 uM for ATP</KM>
        <Vmax evidence="2">113.6 umol/min/mg enzyme with GlcNAc as substrate</Vmax>
        <Vmax evidence="2">74.8 umol/min/mg enzyme with MurNAc as substrate</Vmax>
        <text evidence="2">kcat is 65.0 sec(-1) with GlcNAc as substrate. kcat is 42.8 sec(-1) with MurNAc as substrate.</text>
    </kinetics>
    <phDependence>
        <text evidence="2">Optimum pH is 7.5 to 9.0. Retains half maximal activity at about pH 6.5 and 10.5 and is inactive at pH 5 and below.</text>
    </phDependence>
</comment>
<comment type="pathway">
    <text evidence="5">Cell wall biogenesis; peptidoglycan recycling.</text>
</comment>
<comment type="subcellular location">
    <subcellularLocation>
        <location evidence="5">Cytoplasm</location>
    </subcellularLocation>
</comment>
<comment type="similarity">
    <text evidence="4">Belongs to the eukaryotic-type N-acetylglucosamine kinase family.</text>
</comment>
<evidence type="ECO:0000250" key="1">
    <source>
        <dbReference type="UniProtKB" id="Q9UJ70"/>
    </source>
</evidence>
<evidence type="ECO:0000269" key="2">
    <source>
    </source>
</evidence>
<evidence type="ECO:0000303" key="3">
    <source>
    </source>
</evidence>
<evidence type="ECO:0000305" key="4"/>
<evidence type="ECO:0000305" key="5">
    <source>
    </source>
</evidence>
<evidence type="ECO:0000312" key="6">
    <source>
        <dbReference type="EMBL" id="AAK78165.1"/>
    </source>
</evidence>
<feature type="chain" id="PRO_0000436514" description="N-acetylmuramic acid/N-acetylglucosamine kinase">
    <location>
        <begin position="1"/>
        <end position="306"/>
    </location>
</feature>
<feature type="binding site" evidence="1">
    <location>
        <position position="12"/>
    </location>
    <ligand>
        <name>ATP</name>
        <dbReference type="ChEBI" id="CHEBI:30616"/>
    </ligand>
</feature>
<feature type="binding site" evidence="1">
    <location>
        <position position="35"/>
    </location>
    <ligand>
        <name>substrate</name>
    </ligand>
</feature>
<feature type="binding site" evidence="1">
    <location>
        <position position="124"/>
    </location>
    <ligand>
        <name>ATP</name>
        <dbReference type="ChEBI" id="CHEBI:30616"/>
    </ligand>
</feature>
<feature type="binding site" evidence="1">
    <location>
        <begin position="142"/>
        <end position="144"/>
    </location>
    <ligand>
        <name>substrate</name>
    </ligand>
</feature>
<feature type="binding site" evidence="1">
    <location>
        <position position="149"/>
    </location>
    <ligand>
        <name>substrate</name>
    </ligand>
</feature>
<feature type="binding site" evidence="1">
    <location>
        <position position="208"/>
    </location>
    <ligand>
        <name>ATP</name>
        <dbReference type="ChEBI" id="CHEBI:30616"/>
    </ligand>
</feature>